<reference key="1">
    <citation type="journal article" date="1993" name="Mol. Microbiol.">
        <title>Identification of cpsD, a gene essential for type III capsule expression in group B streptococci.</title>
        <authorList>
            <person name="Rubens C.E."/>
            <person name="Heggen L.M."/>
            <person name="Haft R.F."/>
            <person name="Wessels M.R."/>
        </authorList>
    </citation>
    <scope>NUCLEOTIDE SEQUENCE [GENOMIC DNA]</scope>
    <source>
        <strain>COH1 / Serotype III</strain>
    </source>
</reference>
<reference key="2">
    <citation type="journal article" date="2002" name="Mol. Microbiol.">
        <title>Genome sequence of Streptococcus agalactiae, a pathogen causing invasive neonatal disease.</title>
        <authorList>
            <person name="Glaser P."/>
            <person name="Rusniok C."/>
            <person name="Buchrieser C."/>
            <person name="Chevalier F."/>
            <person name="Frangeul L."/>
            <person name="Msadek T."/>
            <person name="Zouine M."/>
            <person name="Couve E."/>
            <person name="Lalioui L."/>
            <person name="Poyart C."/>
            <person name="Trieu-Cuot P."/>
            <person name="Kunst F."/>
        </authorList>
    </citation>
    <scope>NUCLEOTIDE SEQUENCE [LARGE SCALE GENOMIC DNA]</scope>
    <source>
        <strain>NEM316</strain>
    </source>
</reference>
<keyword id="KW-0972">Capsule biogenesis/degradation</keyword>
<keyword id="KW-0270">Exopolysaccharide synthesis</keyword>
<keyword id="KW-0378">Hydrolase</keyword>
<keyword id="KW-0464">Manganese</keyword>
<keyword id="KW-0904">Protein phosphatase</keyword>
<proteinExistence type="inferred from homology"/>
<organism>
    <name type="scientific">Streptococcus agalactiae serotype III (strain NEM316)</name>
    <dbReference type="NCBI Taxonomy" id="211110"/>
    <lineage>
        <taxon>Bacteria</taxon>
        <taxon>Bacillati</taxon>
        <taxon>Bacillota</taxon>
        <taxon>Bacilli</taxon>
        <taxon>Lactobacillales</taxon>
        <taxon>Streptococcaceae</taxon>
        <taxon>Streptococcus</taxon>
    </lineage>
</organism>
<name>CPSB_STRA3</name>
<feature type="chain" id="PRO_0000057889" description="Tyrosine-protein phosphatase CpsB">
    <location>
        <begin position="1"/>
        <end position="243"/>
    </location>
</feature>
<feature type="sequence conflict" description="In Ref. 1; AAB00361." evidence="2" ref="1">
    <original>A</original>
    <variation>T</variation>
    <location>
        <position position="66"/>
    </location>
</feature>
<feature type="sequence conflict" description="In Ref. 1; AAB00361." evidence="2" ref="1">
    <original>S</original>
    <variation>A</variation>
    <location>
        <position position="142"/>
    </location>
</feature>
<feature type="sequence conflict" description="In Ref. 1; AAB00361." evidence="2" ref="1">
    <original>S</original>
    <variation>F</variation>
    <location>
        <position position="165"/>
    </location>
</feature>
<comment type="function">
    <text evidence="1">Dephosphorylates CpsD. Involved in the regulation of capsular polysaccharide biosynthesis (By similarity).</text>
</comment>
<comment type="catalytic activity">
    <reaction>
        <text>O-phospho-L-tyrosyl-[protein] + H2O = L-tyrosyl-[protein] + phosphate</text>
        <dbReference type="Rhea" id="RHEA:10684"/>
        <dbReference type="Rhea" id="RHEA-COMP:10136"/>
        <dbReference type="Rhea" id="RHEA-COMP:20101"/>
        <dbReference type="ChEBI" id="CHEBI:15377"/>
        <dbReference type="ChEBI" id="CHEBI:43474"/>
        <dbReference type="ChEBI" id="CHEBI:46858"/>
        <dbReference type="ChEBI" id="CHEBI:61978"/>
        <dbReference type="EC" id="3.1.3.48"/>
    </reaction>
</comment>
<comment type="cofactor">
    <cofactor evidence="1">
        <name>Mn(2+)</name>
        <dbReference type="ChEBI" id="CHEBI:29035"/>
    </cofactor>
</comment>
<comment type="pathway">
    <text>Capsule biogenesis; capsule polysaccharide biosynthesis.</text>
</comment>
<comment type="similarity">
    <text evidence="2">Belongs to the metallo-dependent hydrolases superfamily. CpsB/CapC family.</text>
</comment>
<comment type="caution">
    <text evidence="3">Was originally called CpsA.</text>
</comment>
<sequence>MIDIHSHIVFDVDDGPKTLEESLSLIEESYRQGVRIIVSTSHRRKGMFETPEDIIFKNFSIVKHEAEKRFEHLQILYGGELYYTSDMLEKLKLKQIPTLNNTKFALIEFSMQTSWKDIHTALSNVLMLGITPVVAHIERYNSLENQKERVKEIINMGCYTQINSSHILKQKLFNDKHKRFKKRARYFLEENLVHFVASDMHNLDVRPPFLAEAYKIICRDFGKERANQLFIENAQSILKNHYI</sequence>
<dbReference type="EC" id="3.1.3.48"/>
<dbReference type="EMBL" id="AF163833">
    <property type="protein sequence ID" value="AAB00361.1"/>
    <property type="molecule type" value="Genomic_DNA"/>
</dbReference>
<dbReference type="EMBL" id="AL766849">
    <property type="protein sequence ID" value="CAD46906.1"/>
    <property type="molecule type" value="Genomic_DNA"/>
</dbReference>
<dbReference type="PIR" id="S34974">
    <property type="entry name" value="S34974"/>
</dbReference>
<dbReference type="SMR" id="Q04661"/>
<dbReference type="KEGG" id="san:cpsB"/>
<dbReference type="eggNOG" id="COG4464">
    <property type="taxonomic scope" value="Bacteria"/>
</dbReference>
<dbReference type="HOGENOM" id="CLU_085966_1_0_9"/>
<dbReference type="UniPathway" id="UPA00934"/>
<dbReference type="Proteomes" id="UP000000823">
    <property type="component" value="Chromosome"/>
</dbReference>
<dbReference type="GO" id="GO:0030145">
    <property type="term" value="F:manganese ion binding"/>
    <property type="evidence" value="ECO:0007669"/>
    <property type="project" value="InterPro"/>
</dbReference>
<dbReference type="GO" id="GO:0004725">
    <property type="term" value="F:protein tyrosine phosphatase activity"/>
    <property type="evidence" value="ECO:0007669"/>
    <property type="project" value="UniProtKB-EC"/>
</dbReference>
<dbReference type="GO" id="GO:0045227">
    <property type="term" value="P:capsule polysaccharide biosynthetic process"/>
    <property type="evidence" value="ECO:0007669"/>
    <property type="project" value="UniProtKB-UniPathway"/>
</dbReference>
<dbReference type="Gene3D" id="3.20.20.140">
    <property type="entry name" value="Metal-dependent hydrolases"/>
    <property type="match status" value="1"/>
</dbReference>
<dbReference type="InterPro" id="IPR048208">
    <property type="entry name" value="Caps_polysacc_synth_CpsB"/>
</dbReference>
<dbReference type="InterPro" id="IPR016667">
    <property type="entry name" value="Caps_polysacc_synth_CpsB/CapC"/>
</dbReference>
<dbReference type="InterPro" id="IPR032466">
    <property type="entry name" value="Metal_Hydrolase"/>
</dbReference>
<dbReference type="NCBIfam" id="NF041488">
    <property type="entry name" value="caps_synth_Cps4B"/>
    <property type="match status" value="1"/>
</dbReference>
<dbReference type="PANTHER" id="PTHR39181">
    <property type="entry name" value="TYROSINE-PROTEIN PHOSPHATASE YWQE"/>
    <property type="match status" value="1"/>
</dbReference>
<dbReference type="PANTHER" id="PTHR39181:SF1">
    <property type="entry name" value="TYROSINE-PROTEIN PHOSPHATASE YWQE"/>
    <property type="match status" value="1"/>
</dbReference>
<dbReference type="Pfam" id="PF19567">
    <property type="entry name" value="CpsB_CapC"/>
    <property type="match status" value="1"/>
</dbReference>
<dbReference type="PIRSF" id="PIRSF016557">
    <property type="entry name" value="Caps_synth_CpsB"/>
    <property type="match status" value="1"/>
</dbReference>
<dbReference type="SUPFAM" id="SSF51556">
    <property type="entry name" value="Metallo-dependent hydrolases"/>
    <property type="match status" value="1"/>
</dbReference>
<evidence type="ECO:0000250" key="1"/>
<evidence type="ECO:0000305" key="2"/>
<evidence type="ECO:0000305" key="3">
    <source>
    </source>
</evidence>
<protein>
    <recommendedName>
        <fullName>Tyrosine-protein phosphatase CpsB</fullName>
        <ecNumber>3.1.3.48</ecNumber>
    </recommendedName>
</protein>
<gene>
    <name type="primary">cpsB</name>
    <name type="ordered locus">gbs1247</name>
</gene>
<accession>Q04661</accession>